<accession>P58035</accession>
<accession>Q2EEU3</accession>
<accession>Q2M610</accession>
<gene>
    <name type="primary">sgcB</name>
    <name type="ordered locus">b4565</name>
    <name type="ordered locus">JW5967</name>
</gene>
<reference key="1">
    <citation type="journal article" date="1997" name="Science">
        <title>The complete genome sequence of Escherichia coli K-12.</title>
        <authorList>
            <person name="Blattner F.R."/>
            <person name="Plunkett G. III"/>
            <person name="Bloch C.A."/>
            <person name="Perna N.T."/>
            <person name="Burland V."/>
            <person name="Riley M."/>
            <person name="Collado-Vides J."/>
            <person name="Glasner J.D."/>
            <person name="Rode C.K."/>
            <person name="Mayhew G.F."/>
            <person name="Gregor J."/>
            <person name="Davis N.W."/>
            <person name="Kirkpatrick H.A."/>
            <person name="Goeden M.A."/>
            <person name="Rose D.J."/>
            <person name="Mau B."/>
            <person name="Shao Y."/>
        </authorList>
    </citation>
    <scope>NUCLEOTIDE SEQUENCE [LARGE SCALE GENOMIC DNA]</scope>
    <source>
        <strain>K12 / MG1655 / ATCC 47076</strain>
    </source>
</reference>
<reference key="2">
    <citation type="journal article" date="2006" name="Mol. Syst. Biol.">
        <title>Highly accurate genome sequences of Escherichia coli K-12 strains MG1655 and W3110.</title>
        <authorList>
            <person name="Hayashi K."/>
            <person name="Morooka N."/>
            <person name="Yamamoto Y."/>
            <person name="Fujita K."/>
            <person name="Isono K."/>
            <person name="Choi S."/>
            <person name="Ohtsubo E."/>
            <person name="Baba T."/>
            <person name="Wanner B.L."/>
            <person name="Mori H."/>
            <person name="Horiuchi T."/>
        </authorList>
    </citation>
    <scope>NUCLEOTIDE SEQUENCE [LARGE SCALE GENOMIC DNA]</scope>
    <source>
        <strain>K12 / W3110 / ATCC 27325 / DSM 5911</strain>
    </source>
</reference>
<reference key="3">
    <citation type="journal article" date="1996" name="Genome Sci. Technol.">
        <title>Novel phosphotransferases system genes revealed by bacterial genome analysis: operons encoding homologues of sugar-specific permease domains of the phosphotransferase system and pentose catabolic enzymes.</title>
        <authorList>
            <person name="Reizer J."/>
            <person name="Charbit A."/>
            <person name="Reizer A."/>
            <person name="Saier M.H. Jr."/>
        </authorList>
    </citation>
    <scope>DISCUSSION OF SEQUENCE</scope>
</reference>
<comment type="function">
    <text evidence="1">The phosphoenolpyruvate-dependent sugar phosphotransferase system (sugar PTS), a major carbohydrate active -transport system, catalyzes the phosphorylation of incoming sugar substrates concomitantly with their translocation across the cell membrane.</text>
</comment>
<comment type="subcellular location">
    <subcellularLocation>
        <location evidence="3">Cytoplasm</location>
    </subcellularLocation>
</comment>
<comment type="domain">
    <text>The EIIB domain is phosphorylated by phospho-EIIA on a cysteinyl or histidyl residue, depending on the transported sugar. Then, it transfers the phosphoryl group to the sugar substrate concomitantly with the sugar uptake processed by the EIIC domain.</text>
</comment>
<keyword id="KW-0963">Cytoplasm</keyword>
<keyword id="KW-0418">Kinase</keyword>
<keyword id="KW-0598">Phosphotransferase system</keyword>
<keyword id="KW-1185">Reference proteome</keyword>
<keyword id="KW-0762">Sugar transport</keyword>
<keyword id="KW-0808">Transferase</keyword>
<keyword id="KW-0813">Transport</keyword>
<organism>
    <name type="scientific">Escherichia coli (strain K12)</name>
    <dbReference type="NCBI Taxonomy" id="83333"/>
    <lineage>
        <taxon>Bacteria</taxon>
        <taxon>Pseudomonadati</taxon>
        <taxon>Pseudomonadota</taxon>
        <taxon>Gammaproteobacteria</taxon>
        <taxon>Enterobacterales</taxon>
        <taxon>Enterobacteriaceae</taxon>
        <taxon>Escherichia</taxon>
    </lineage>
</organism>
<feature type="chain" id="PRO_0000186690" description="Putative phosphotransferase enzyme IIB component SgcB">
    <location>
        <begin position="1"/>
        <end position="92"/>
    </location>
</feature>
<feature type="domain" description="PTS EIIB type-2" evidence="2">
    <location>
        <begin position="1"/>
        <end position="92"/>
    </location>
</feature>
<feature type="active site" description="Phosphocysteine intermediate" evidence="1">
    <location>
        <position position="8"/>
    </location>
</feature>
<evidence type="ECO:0000250" key="1"/>
<evidence type="ECO:0000255" key="2">
    <source>
        <dbReference type="PROSITE-ProRule" id="PRU00422"/>
    </source>
</evidence>
<evidence type="ECO:0000305" key="3"/>
<sequence length="92" mass="9803">MKKILVACGTGMSTSTMIAHKLQEFLTEQGISATTAQCCLNEIPLNCNGMDLIVTSMRTNSDYGIPTLNGAALLTGINDDALKQQIKALLTQ</sequence>
<dbReference type="EC" id="2.7.1.-"/>
<dbReference type="EMBL" id="U00096">
    <property type="protein sequence ID" value="ABD18717.1"/>
    <property type="molecule type" value="Genomic_DNA"/>
</dbReference>
<dbReference type="EMBL" id="AP009048">
    <property type="protein sequence ID" value="BAE78296.1"/>
    <property type="molecule type" value="Genomic_DNA"/>
</dbReference>
<dbReference type="RefSeq" id="WP_000722973.1">
    <property type="nucleotide sequence ID" value="NZ_SSUV01000012.1"/>
</dbReference>
<dbReference type="RefSeq" id="YP_588476.1">
    <property type="nucleotide sequence ID" value="NC_000913.3"/>
</dbReference>
<dbReference type="SMR" id="P58035"/>
<dbReference type="BioGRID" id="4262742">
    <property type="interactions" value="7"/>
</dbReference>
<dbReference type="ComplexPortal" id="CPX-5990">
    <property type="entry name" value="sgcABC sugar permease enzyme II complex"/>
</dbReference>
<dbReference type="FunCoup" id="P58035">
    <property type="interactions" value="105"/>
</dbReference>
<dbReference type="STRING" id="511145.b4565"/>
<dbReference type="TCDB" id="4.A.5.1.3">
    <property type="family name" value="the pts galactitol (gat) family"/>
</dbReference>
<dbReference type="PaxDb" id="511145-b4565"/>
<dbReference type="EnsemblBacteria" id="ABD18717">
    <property type="protein sequence ID" value="ABD18717"/>
    <property type="gene ID" value="b4565"/>
</dbReference>
<dbReference type="GeneID" id="1450295"/>
<dbReference type="KEGG" id="ecj:JW5967"/>
<dbReference type="KEGG" id="eco:b4565"/>
<dbReference type="PATRIC" id="fig|1411691.4.peg.2392"/>
<dbReference type="eggNOG" id="COG3414">
    <property type="taxonomic scope" value="Bacteria"/>
</dbReference>
<dbReference type="HOGENOM" id="CLU_159248_3_3_6"/>
<dbReference type="InParanoid" id="P58035"/>
<dbReference type="OMA" id="CAYIAIT"/>
<dbReference type="PhylomeDB" id="P58035"/>
<dbReference type="BioCyc" id="EcoCyc:MONOMER0-2121"/>
<dbReference type="BioCyc" id="MetaCyc:MONOMER0-2121"/>
<dbReference type="PRO" id="PR:P58035"/>
<dbReference type="Proteomes" id="UP000000625">
    <property type="component" value="Chromosome"/>
</dbReference>
<dbReference type="GO" id="GO:0005737">
    <property type="term" value="C:cytoplasm"/>
    <property type="evidence" value="ECO:0007669"/>
    <property type="project" value="UniProtKB-SubCell"/>
</dbReference>
<dbReference type="GO" id="GO:1902495">
    <property type="term" value="C:transmembrane transporter complex"/>
    <property type="evidence" value="ECO:0000303"/>
    <property type="project" value="ComplexPortal"/>
</dbReference>
<dbReference type="GO" id="GO:0016301">
    <property type="term" value="F:kinase activity"/>
    <property type="evidence" value="ECO:0007669"/>
    <property type="project" value="UniProtKB-KW"/>
</dbReference>
<dbReference type="GO" id="GO:0008982">
    <property type="term" value="F:protein-N(PI)-phosphohistidine-sugar phosphotransferase activity"/>
    <property type="evidence" value="ECO:0007669"/>
    <property type="project" value="InterPro"/>
</dbReference>
<dbReference type="GO" id="GO:0008643">
    <property type="term" value="P:carbohydrate transport"/>
    <property type="evidence" value="ECO:0000303"/>
    <property type="project" value="ComplexPortal"/>
</dbReference>
<dbReference type="GO" id="GO:0009401">
    <property type="term" value="P:phosphoenolpyruvate-dependent sugar phosphotransferase system"/>
    <property type="evidence" value="ECO:0000255"/>
    <property type="project" value="EcoCyc"/>
</dbReference>
<dbReference type="GO" id="GO:0015795">
    <property type="term" value="P:sorbitol transmembrane transport"/>
    <property type="evidence" value="ECO:0000303"/>
    <property type="project" value="ComplexPortal"/>
</dbReference>
<dbReference type="CDD" id="cd05566">
    <property type="entry name" value="PTS_IIB_galactitol"/>
    <property type="match status" value="1"/>
</dbReference>
<dbReference type="FunFam" id="3.40.50.2300:FF:000124">
    <property type="entry name" value="PTS sugar transporter subunit IIB"/>
    <property type="match status" value="1"/>
</dbReference>
<dbReference type="Gene3D" id="3.40.50.2300">
    <property type="match status" value="1"/>
</dbReference>
<dbReference type="InterPro" id="IPR036095">
    <property type="entry name" value="PTS_EIIB-like_sf"/>
</dbReference>
<dbReference type="InterPro" id="IPR013011">
    <property type="entry name" value="PTS_EIIB_2"/>
</dbReference>
<dbReference type="InterPro" id="IPR003501">
    <property type="entry name" value="PTS_EIIB_2/3"/>
</dbReference>
<dbReference type="Pfam" id="PF02302">
    <property type="entry name" value="PTS_IIB"/>
    <property type="match status" value="1"/>
</dbReference>
<dbReference type="SUPFAM" id="SSF52794">
    <property type="entry name" value="PTS system IIB component-like"/>
    <property type="match status" value="1"/>
</dbReference>
<dbReference type="PROSITE" id="PS51099">
    <property type="entry name" value="PTS_EIIB_TYPE_2"/>
    <property type="match status" value="1"/>
</dbReference>
<proteinExistence type="inferred from homology"/>
<name>SGCB_ECOLI</name>
<protein>
    <recommendedName>
        <fullName>Putative phosphotransferase enzyme IIB component SgcB</fullName>
        <ecNumber>2.7.1.-</ecNumber>
    </recommendedName>
    <alternativeName>
        <fullName>Putative PTS system EIIB component</fullName>
    </alternativeName>
</protein>